<sequence>MSSSASFNEPIAIVGSGCRFAGGASSPSKLWDLLCKPKDIRSDITGRRFNAEGFYHPDGSHHGHMNVLQSYLLEEDTRLFDAEFFGTNPVEAKAMDPQQRLLLEVVYESIESAGLCIERLRGSNTAVFAGLMCGDYEAMMLRDLDQAPTHFATGTSRAVMSNRVSYFFDWRGPSVTIDTACSSSLVAVHYAIQALRSGDSHTAVACGSNLIFGPEMYVIESKLKMLSPDGLGRMWDKDANGYARGEGVTAIILKTLSQALADNDRIEAVIRETGVNSDGTTPGITMPSASAQRDLIQSVYRKAGLDPEAMEDRPQYIEAHGTGTPAGDPIEAEALSTAFFGNTEKASTPIYTGSIKTVLGHTEGSAGIAALMKVTQAIRNAILPPNLWFQQLNPKLKQFYGNLQIPTQALPWPTVSDRRPKRASINNFGFGGTNAHAIVESYEPEPRQTVESPDAATVSTPFVFSAASTESLRSNLAAYATYLDANPKTSAGDLAYTLRERRSVLPFRIAFPDTTVESLKLSITTRLVEPGNESLGVRTWTAGNRGRSRLLGVFTGQGAQYARMGAELVNQAVLAGQLLEKLEGYLSELPEGDRPSWSLRDEMLADGPLSHVGEAAISQPLCTAVQIILVDLLKSAKVKFDTVVGHSSGEIGAAYAAGYLSARDALLIAYFRGLHCKHATSPNGDIKGAMLAAGTSMEDAIEICEAEEFLGRVTVAASNSSSSVTFSGDEDAIDEIAAVLQDENKFNRRLKVDTAYHSSHMLPCFDLYVASLRRAGVKALLGNGECTWISSVYEGRSIDPSTDELSGVYWAHNMTKAVLFSQAVRAAVKIATDNDPYTAVLEVGPHAALAGPAKQNIFEALQKELPYHGTLLRGGNAMTAFSTCLGFLWTHLDTASIDLGSCEAAHSGNKQQFTVLGDLPSYQWKHESAYWAESRKSRQMRLRNQPFHQLLGDVSPDSAPHILRWKNILKPREMTWLEGHQVQSQVVLPAASYVSTAIEAAQSLASGKKIQLIELSNFHIHNAITFDQNDIGIEVHIEVSNIYIKENQVHANFTYSAALGDELNDLVLAANGELKVVLVDETPNISLFPQRQAPPPHMIPVQPSRLYGFMKGLEYDFSGAFQSLIKLERNLGHATCLAQKAKVLVPDADELLVHPIDLDAAFQSVMLAYSYPGDDQLRLLHLPTSIAKLRVNPSVLASQRYAENDMTLIDSTCSTGDRAEPGDGFSGSVNMYAPGFDHAAIQVDRVKFKPVGSDASNDRDVFYKMHWVPSAADGMLAAASVLVGEQDRELMFVLSRIAAYYLRIFDEQLPENDPARSTSPLCHYMNYARHMTNLLKNGQHQWAHQDWLNDTEEDVLDDIVAKGFMENSDVKIMLLVGNTMPRVFKGETTMLEHFRTSGLLDEYYSNGFGTKQSTLWVASILKQLTDRNPHLNMLEIGAGTGGATKTILQSIGHDFGSYTFTDISSSFFENAAETFSDWQDSMVFKVCNAEIDPVQQGFQHGSYDVVIAFMVVHACARLDEAVANLRKLLKPGGLLVLGEGASDGAMQAGAGFIFGTLPGWWRGADEGRTLSPLVNASEWDVILKGSGFSGIDTMSPPTLFNAFGITLFVSTAIDERIEFARNPLAITKSTVYNKVVIVGGRTPPIVQLSREIQEALIPLAKQVLSYASLEDLDENTLEDETVVVSLVDLEAPVFKGITSERWYKFRKLFETKRDILWLTSGRLEDEPYCNMTVGFGRSAMHEEETLRIQYVDVTNVGNFDAQKIAQYLLRFTSARLDDKDILYTKEPEIIIDDEGRELVPRLFTIKASNDRLNSTTRSIFDPVDINKHVVELQYGKDGPNFRQLSRYELSEEPTTPQSDHAELRLTSSTVSAIRCPTGYQFLVVGTDQTGAQRLALTSSLTSLLRIPLESTVLCEHPGLSEANYLGLVAAELSVIAFCDSLFTGQKLAVHNAPASIVRAVLSHVSPKGLSVTFTTDTLGTAVSPDVASQIHIPMFSARSDIEAILPSDIVCFVDFSASIQAENVAMITSCLPSYCRKENVNTIFSPHGIDTSASTAVLGQLLNRAVNIVKERNVSTTPTLLGLKALAHGESGTDPLTIIEWTGCTTVPARVTRFESNQLFKSHKTYWLVGLSGALGISLCDWMIERGVRYLVLTSRNPKIDPRWIRNHERNGVTIKIMLCDVTDEKAINEVHAEIVKTLPPIVGLLNGAMVLRDVSVRNMEFDQVTDVIRPKVLGSIHLDRIFYNIDLDFFVLLSSINCVIGNVGQANYAAANMGMIGVAGNRRKRGLRSSVVNVGAIIGVGYITQSDRQLDVTVAKTAMMHLSEQDFHQIFAECMEASHLDSPNGPEISTGLLSITPETIDIPPWYSDPKFARFRVHKAADTGDKSDATNSASTQDLLQACRSQIEVANVIKQAYCTQLRKMLQVSTVDGDLMMMRGVDLGFDSLLSVDVRSWFLKNFRVSIPVLKIMANDVRMSSLVELAAESIPAELVPGVPQANANPNGPSSPDSDATESSNQNSDVDVTSTRATSPSTPAATSPDSNVKIKTNSSFAVDWKFETIPPEPFALPGLSDAPKPRENPEVVVLTGCSGLLGHHLLNTLIAQPSICKIICLAVRRLSSRLESGDLPAPSERICYYEGDLTSTYFGLDTTTWTSIFHETDAVIHNGSDTSHLKYYSALKQANVESTKQLVSTCLQRMIPLHYISSAGVALFAGLAAFPPISCTQTGKTPPADGSHGYMCGKWVCEKMLERTHEKHRLRIVIQRPSTIIRDGKDATVERAGFDWVNSLLHFAHKTQTVPRVEFNAGAFDLVSVETCCEDVVRELPNRGREGITYVNNVGDVVIPMAQMADVGLSKVEKRYSVLPMEEWTKIVVNAGMHPAVAALIETFDEPGVEKYPALLRSEDA</sequence>
<accession>A0A0C6E0I7</accession>
<comment type="function">
    <text evidence="1 8">Highly reducing polyketide synthase; part of the gene cluster that mediates the biosynthesis of betaenones, phytotoxic polyketides involved in leaf spot disease in sugar beets (PubMed:25530455). The first step of the pathway is the synthesis of dehydroprobetaenone I by the polyketide synthase bet1 and the enoyl reductase bet3 via condensation of one acetyl-CoA starter unit with 7 malonyl-CoA units and 5 methylations (PubMed:25530455). The C-terminal reductase (R) domain of bet1 catalyzes the reductive release of the polyketide chain (PubMed:25530455). Because bet1 lacks a designated enoylreductase (ER) domain, the required activity is provided the enoyl reductase bet3 (PubMed:25530455). The short-chain dehydrogenase/reductase bet4 then catalyzes reduction of dehydroprobetaenone I to probetaenone I (PubMed:25530455). The cytochrome P450 monooxygenase bet2 catalyzes successive epoxidation, oxidation (resulting from epoxide opening) and hydroxylation to install a tertiary alcohol in the decaline ring to yield betaenone C from dehydroprobetaenone I and betaenone B from probetaenone I (PubMed:25530455). The FAD-linked oxidoreductase (orf1) is probably responsible for the conversion of betaenone C to betaenone A via an intramolecular aldol reaction between C-1 and C-17 to form the bridged tricyclic system in betaenone A (By similarity).</text>
</comment>
<comment type="catalytic activity">
    <reaction evidence="8">
        <text>7 malonyl-CoA + acetyl-CoA + 10 AH2 + 5 S-adenosyl-L-methionine + 2 H(+) = dehydroprobetaenone I + 10 A + 5 S-adenosyl-L-homocysteine + 7 CO2 + 8 CoA + 6 H2O</text>
        <dbReference type="Rhea" id="RHEA:51348"/>
        <dbReference type="ChEBI" id="CHEBI:13193"/>
        <dbReference type="ChEBI" id="CHEBI:15377"/>
        <dbReference type="ChEBI" id="CHEBI:15378"/>
        <dbReference type="ChEBI" id="CHEBI:16526"/>
        <dbReference type="ChEBI" id="CHEBI:17499"/>
        <dbReference type="ChEBI" id="CHEBI:57287"/>
        <dbReference type="ChEBI" id="CHEBI:57288"/>
        <dbReference type="ChEBI" id="CHEBI:57384"/>
        <dbReference type="ChEBI" id="CHEBI:57856"/>
        <dbReference type="ChEBI" id="CHEBI:59789"/>
        <dbReference type="ChEBI" id="CHEBI:145061"/>
    </reaction>
    <physiologicalReaction direction="left-to-right" evidence="8">
        <dbReference type="Rhea" id="RHEA:51349"/>
    </physiologicalReaction>
</comment>
<comment type="cofactor">
    <cofactor evidence="2">
        <name>pantetheine 4'-phosphate</name>
        <dbReference type="ChEBI" id="CHEBI:47942"/>
    </cofactor>
    <text evidence="2">Binds 1 phosphopantetheine covalently.</text>
</comment>
<comment type="pathway">
    <text evidence="8">Mycotoxin biosynthesis.</text>
</comment>
<comment type="domain">
    <text evidence="8">Multidomain protein; including a ketosynthase (KS) that catalyzes repeated decarboxylative condensation to elongate the polyketide backbone; a malonyl-CoA:ACP transacylase (MAT) that selects and transfers the extender unit malonyl-CoA; a dehydratase (DH) domain that reduces hydroxyl groups to enoyl groups; a methyltransferase (CMeT) domain responsible for the incorporation of methyl groups; a ketoreductase (KR) domain that catalyzes beta-ketoreduction steps; an acyl-carrier protein (ACP) that serves as the tether of the growing and completed polyketide via its phosphopantetheinyl arm; and a C-terminal reductase (R) domain that catalyzes the reductive release of the polyketide chain.</text>
</comment>
<reference key="1">
    <citation type="journal article" date="2015" name="Chem. Commun. (Camb.)">
        <title>Heterologous expression of highly reducing polyketide synthase involved in betaenone biosynthesis.</title>
        <authorList>
            <person name="Ugai T."/>
            <person name="Minami A."/>
            <person name="Fujii R."/>
            <person name="Tanaka M."/>
            <person name="Oguri H."/>
            <person name="Gomi K."/>
            <person name="Oikawa H."/>
        </authorList>
    </citation>
    <scope>NUCLEOTIDE SEQUENCE [GENOMIC DNA]</scope>
    <scope>FUNCTION</scope>
    <scope>CATALYTIC ACTIVITY</scope>
    <scope>MUTAGENESIS OF SER-2705; TYR-2737 AND LYS-2741</scope>
    <scope>PATHWAY</scope>
</reference>
<dbReference type="EC" id="2.3.1.-" evidence="8"/>
<dbReference type="EMBL" id="LC011911">
    <property type="protein sequence ID" value="BAQ25466.1"/>
    <property type="molecule type" value="Genomic_DNA"/>
</dbReference>
<dbReference type="SMR" id="A0A0C6E0I7"/>
<dbReference type="GO" id="GO:0004315">
    <property type="term" value="F:3-oxoacyl-[acyl-carrier-protein] synthase activity"/>
    <property type="evidence" value="ECO:0007669"/>
    <property type="project" value="InterPro"/>
</dbReference>
<dbReference type="GO" id="GO:0004312">
    <property type="term" value="F:fatty acid synthase activity"/>
    <property type="evidence" value="ECO:0007669"/>
    <property type="project" value="TreeGrafter"/>
</dbReference>
<dbReference type="GO" id="GO:0008168">
    <property type="term" value="F:methyltransferase activity"/>
    <property type="evidence" value="ECO:0007669"/>
    <property type="project" value="UniProtKB-KW"/>
</dbReference>
<dbReference type="GO" id="GO:0016491">
    <property type="term" value="F:oxidoreductase activity"/>
    <property type="evidence" value="ECO:0007669"/>
    <property type="project" value="UniProtKB-KW"/>
</dbReference>
<dbReference type="GO" id="GO:0006633">
    <property type="term" value="P:fatty acid biosynthetic process"/>
    <property type="evidence" value="ECO:0007669"/>
    <property type="project" value="InterPro"/>
</dbReference>
<dbReference type="GO" id="GO:0032259">
    <property type="term" value="P:methylation"/>
    <property type="evidence" value="ECO:0007669"/>
    <property type="project" value="UniProtKB-KW"/>
</dbReference>
<dbReference type="GO" id="GO:0044550">
    <property type="term" value="P:secondary metabolite biosynthetic process"/>
    <property type="evidence" value="ECO:0007669"/>
    <property type="project" value="TreeGrafter"/>
</dbReference>
<dbReference type="CDD" id="cd02440">
    <property type="entry name" value="AdoMet_MTases"/>
    <property type="match status" value="1"/>
</dbReference>
<dbReference type="CDD" id="cd00833">
    <property type="entry name" value="PKS"/>
    <property type="match status" value="1"/>
</dbReference>
<dbReference type="FunFam" id="3.40.47.10:FF:000019">
    <property type="entry name" value="Polyketide synthase type I"/>
    <property type="match status" value="1"/>
</dbReference>
<dbReference type="Gene3D" id="3.40.47.10">
    <property type="match status" value="1"/>
</dbReference>
<dbReference type="Gene3D" id="3.40.366.10">
    <property type="entry name" value="Malonyl-Coenzyme A Acyl Carrier Protein, domain 2"/>
    <property type="match status" value="1"/>
</dbReference>
<dbReference type="Gene3D" id="3.40.50.720">
    <property type="entry name" value="NAD(P)-binding Rossmann-like Domain"/>
    <property type="match status" value="2"/>
</dbReference>
<dbReference type="Gene3D" id="3.10.129.110">
    <property type="entry name" value="Polyketide synthase dehydratase"/>
    <property type="match status" value="1"/>
</dbReference>
<dbReference type="Gene3D" id="3.40.50.150">
    <property type="entry name" value="Vaccinia Virus protein VP39"/>
    <property type="match status" value="1"/>
</dbReference>
<dbReference type="InterPro" id="IPR001227">
    <property type="entry name" value="Ac_transferase_dom_sf"/>
</dbReference>
<dbReference type="InterPro" id="IPR014043">
    <property type="entry name" value="Acyl_transferase_dom"/>
</dbReference>
<dbReference type="InterPro" id="IPR016035">
    <property type="entry name" value="Acyl_Trfase/lysoPLipase"/>
</dbReference>
<dbReference type="InterPro" id="IPR013120">
    <property type="entry name" value="Far_NAD-bd"/>
</dbReference>
<dbReference type="InterPro" id="IPR018201">
    <property type="entry name" value="Ketoacyl_synth_AS"/>
</dbReference>
<dbReference type="InterPro" id="IPR014031">
    <property type="entry name" value="Ketoacyl_synth_C"/>
</dbReference>
<dbReference type="InterPro" id="IPR014030">
    <property type="entry name" value="Ketoacyl_synth_N"/>
</dbReference>
<dbReference type="InterPro" id="IPR016036">
    <property type="entry name" value="Malonyl_transacylase_ACP-bd"/>
</dbReference>
<dbReference type="InterPro" id="IPR013217">
    <property type="entry name" value="Methyltransf_12"/>
</dbReference>
<dbReference type="InterPro" id="IPR036291">
    <property type="entry name" value="NAD(P)-bd_dom_sf"/>
</dbReference>
<dbReference type="InterPro" id="IPR032821">
    <property type="entry name" value="PKS_assoc"/>
</dbReference>
<dbReference type="InterPro" id="IPR020841">
    <property type="entry name" value="PKS_Beta-ketoAc_synthase_dom"/>
</dbReference>
<dbReference type="InterPro" id="IPR042104">
    <property type="entry name" value="PKS_dehydratase_sf"/>
</dbReference>
<dbReference type="InterPro" id="IPR020807">
    <property type="entry name" value="PKS_DH"/>
</dbReference>
<dbReference type="InterPro" id="IPR049551">
    <property type="entry name" value="PKS_DH_C"/>
</dbReference>
<dbReference type="InterPro" id="IPR049552">
    <property type="entry name" value="PKS_DH_N"/>
</dbReference>
<dbReference type="InterPro" id="IPR013968">
    <property type="entry name" value="PKS_KR"/>
</dbReference>
<dbReference type="InterPro" id="IPR049900">
    <property type="entry name" value="PKS_mFAS_DH"/>
</dbReference>
<dbReference type="InterPro" id="IPR050091">
    <property type="entry name" value="PKS_NRPS_Biosynth_Enz"/>
</dbReference>
<dbReference type="InterPro" id="IPR006162">
    <property type="entry name" value="Ppantetheine_attach_site"/>
</dbReference>
<dbReference type="InterPro" id="IPR029063">
    <property type="entry name" value="SAM-dependent_MTases_sf"/>
</dbReference>
<dbReference type="InterPro" id="IPR016039">
    <property type="entry name" value="Thiolase-like"/>
</dbReference>
<dbReference type="PANTHER" id="PTHR43775">
    <property type="entry name" value="FATTY ACID SYNTHASE"/>
    <property type="match status" value="1"/>
</dbReference>
<dbReference type="PANTHER" id="PTHR43775:SF20">
    <property type="entry name" value="HYBRID PKS-NRPS SYNTHETASE APDA"/>
    <property type="match status" value="1"/>
</dbReference>
<dbReference type="Pfam" id="PF00698">
    <property type="entry name" value="Acyl_transf_1"/>
    <property type="match status" value="1"/>
</dbReference>
<dbReference type="Pfam" id="PF16197">
    <property type="entry name" value="KAsynt_C_assoc"/>
    <property type="match status" value="1"/>
</dbReference>
<dbReference type="Pfam" id="PF00109">
    <property type="entry name" value="ketoacyl-synt"/>
    <property type="match status" value="1"/>
</dbReference>
<dbReference type="Pfam" id="PF02801">
    <property type="entry name" value="Ketoacyl-synt_C"/>
    <property type="match status" value="1"/>
</dbReference>
<dbReference type="Pfam" id="PF08659">
    <property type="entry name" value="KR"/>
    <property type="match status" value="1"/>
</dbReference>
<dbReference type="Pfam" id="PF08242">
    <property type="entry name" value="Methyltransf_12"/>
    <property type="match status" value="1"/>
</dbReference>
<dbReference type="Pfam" id="PF07993">
    <property type="entry name" value="NAD_binding_4"/>
    <property type="match status" value="1"/>
</dbReference>
<dbReference type="Pfam" id="PF21089">
    <property type="entry name" value="PKS_DH_N"/>
    <property type="match status" value="1"/>
</dbReference>
<dbReference type="Pfam" id="PF14765">
    <property type="entry name" value="PS-DH"/>
    <property type="match status" value="1"/>
</dbReference>
<dbReference type="SMART" id="SM00827">
    <property type="entry name" value="PKS_AT"/>
    <property type="match status" value="1"/>
</dbReference>
<dbReference type="SMART" id="SM00826">
    <property type="entry name" value="PKS_DH"/>
    <property type="match status" value="1"/>
</dbReference>
<dbReference type="SMART" id="SM00822">
    <property type="entry name" value="PKS_KR"/>
    <property type="match status" value="1"/>
</dbReference>
<dbReference type="SMART" id="SM00825">
    <property type="entry name" value="PKS_KS"/>
    <property type="match status" value="1"/>
</dbReference>
<dbReference type="SUPFAM" id="SSF52151">
    <property type="entry name" value="FabD/lysophospholipase-like"/>
    <property type="match status" value="1"/>
</dbReference>
<dbReference type="SUPFAM" id="SSF51735">
    <property type="entry name" value="NAD(P)-binding Rossmann-fold domains"/>
    <property type="match status" value="2"/>
</dbReference>
<dbReference type="SUPFAM" id="SSF55048">
    <property type="entry name" value="Probable ACP-binding domain of malonyl-CoA ACP transacylase"/>
    <property type="match status" value="1"/>
</dbReference>
<dbReference type="SUPFAM" id="SSF53335">
    <property type="entry name" value="S-adenosyl-L-methionine-dependent methyltransferases"/>
    <property type="match status" value="1"/>
</dbReference>
<dbReference type="SUPFAM" id="SSF53901">
    <property type="entry name" value="Thiolase-like"/>
    <property type="match status" value="1"/>
</dbReference>
<dbReference type="PROSITE" id="PS00606">
    <property type="entry name" value="KS3_1"/>
    <property type="match status" value="1"/>
</dbReference>
<dbReference type="PROSITE" id="PS52004">
    <property type="entry name" value="KS3_2"/>
    <property type="match status" value="1"/>
</dbReference>
<dbReference type="PROSITE" id="PS00012">
    <property type="entry name" value="PHOSPHOPANTETHEINE"/>
    <property type="match status" value="1"/>
</dbReference>
<dbReference type="PROSITE" id="PS52019">
    <property type="entry name" value="PKS_MFAS_DH"/>
    <property type="match status" value="1"/>
</dbReference>
<feature type="chain" id="PRO_0000448649" description="Highly reducing polyketide synthase bet1">
    <location>
        <begin position="1"/>
        <end position="2904"/>
    </location>
</feature>
<feature type="domain" description="Ketosynthase family 3 (KS3)" evidence="5">
    <location>
        <begin position="8"/>
        <end position="441"/>
    </location>
</feature>
<feature type="domain" description="PKS/mFAS DH" evidence="6">
    <location>
        <begin position="948"/>
        <end position="1257"/>
    </location>
</feature>
<feature type="domain" description="Carrier" evidence="4">
    <location>
        <begin position="2407"/>
        <end position="2486"/>
    </location>
</feature>
<feature type="region of interest" description="Acyl transferase (AT) domain" evidence="3">
    <location>
        <begin position="553"/>
        <end position="875"/>
    </location>
</feature>
<feature type="region of interest" description="N-terminal hotdog fold" evidence="6">
    <location>
        <begin position="948"/>
        <end position="1081"/>
    </location>
</feature>
<feature type="region of interest" description="Dehydratase (DH) domain" evidence="3">
    <location>
        <begin position="971"/>
        <end position="1255"/>
    </location>
</feature>
<feature type="region of interest" description="C-terminal hotdog fold" evidence="6">
    <location>
        <begin position="1098"/>
        <end position="1257"/>
    </location>
</feature>
<feature type="region of interest" description="Methyltransferase (cMeT) domain" evidence="3">
    <location>
        <begin position="1411"/>
        <end position="1596"/>
    </location>
</feature>
<feature type="region of interest" description="Ketoreductase (KR)domain" evidence="3">
    <location>
        <begin position="2125"/>
        <end position="2298"/>
    </location>
</feature>
<feature type="region of interest" description="Disordered" evidence="7">
    <location>
        <begin position="2492"/>
        <end position="2543"/>
    </location>
</feature>
<feature type="region of interest" description="Reductase (R) domain" evidence="3">
    <location>
        <begin position="2585"/>
        <end position="2817"/>
    </location>
</feature>
<feature type="compositionally biased region" description="Polar residues" evidence="7">
    <location>
        <begin position="2497"/>
        <end position="2523"/>
    </location>
</feature>
<feature type="compositionally biased region" description="Low complexity" evidence="7">
    <location>
        <begin position="2524"/>
        <end position="2541"/>
    </location>
</feature>
<feature type="active site" description="For beta-ketoacyl synthase activity" evidence="5">
    <location>
        <position position="181"/>
    </location>
</feature>
<feature type="active site" description="For beta-ketoacyl synthase activity" evidence="5">
    <location>
        <position position="320"/>
    </location>
</feature>
<feature type="active site" description="For beta-ketoacyl synthase activity" evidence="5">
    <location>
        <position position="361"/>
    </location>
</feature>
<feature type="active site" description="Proton acceptor; for dehydratase activity" evidence="6">
    <location>
        <position position="980"/>
    </location>
</feature>
<feature type="active site" description="Proton donor; for dehydratase activity" evidence="6">
    <location>
        <position position="1159"/>
    </location>
</feature>
<feature type="modified residue" description="O-(pantetheine 4'-phosphoryl)serine" evidence="4">
    <location>
        <position position="2445"/>
    </location>
</feature>
<feature type="mutagenesis site" description="Blocks the production of dehydroprobetaenone I; when associated with F-2737 and A-2741." evidence="8">
    <original>S</original>
    <variation>A</variation>
    <location>
        <position position="2705"/>
    </location>
</feature>
<feature type="mutagenesis site" description="Blocks the production of dehydroprobetaenone I; when associated with A-2705 and A-2741." evidence="8">
    <original>Y</original>
    <variation>F</variation>
    <location>
        <position position="2737"/>
    </location>
</feature>
<feature type="mutagenesis site" description="Blocks the production of dehydroprobetaenone I; when associated with A-2705 and F-2737." evidence="8">
    <original>K</original>
    <variation>A</variation>
    <location>
        <position position="2741"/>
    </location>
</feature>
<protein>
    <recommendedName>
        <fullName evidence="9">Highly reducing polyketide synthase bet1</fullName>
        <shortName evidence="9">HS-PKS bet1</shortName>
        <ecNumber evidence="8">2.3.1.-</ecNumber>
    </recommendedName>
    <alternativeName>
        <fullName evidence="9">Betaenone biosynthesis cluster protein 1</fullName>
    </alternativeName>
</protein>
<name>BET1_NEOBT</name>
<evidence type="ECO:0000250" key="1">
    <source>
        <dbReference type="UniProtKB" id="Q0UK53"/>
    </source>
</evidence>
<evidence type="ECO:0000250" key="2">
    <source>
        <dbReference type="UniProtKB" id="Q9Y8A5"/>
    </source>
</evidence>
<evidence type="ECO:0000255" key="3"/>
<evidence type="ECO:0000255" key="4">
    <source>
        <dbReference type="PROSITE-ProRule" id="PRU00258"/>
    </source>
</evidence>
<evidence type="ECO:0000255" key="5">
    <source>
        <dbReference type="PROSITE-ProRule" id="PRU01348"/>
    </source>
</evidence>
<evidence type="ECO:0000255" key="6">
    <source>
        <dbReference type="PROSITE-ProRule" id="PRU01363"/>
    </source>
</evidence>
<evidence type="ECO:0000256" key="7">
    <source>
        <dbReference type="SAM" id="MobiDB-lite"/>
    </source>
</evidence>
<evidence type="ECO:0000269" key="8">
    <source>
    </source>
</evidence>
<evidence type="ECO:0000303" key="9">
    <source>
    </source>
</evidence>
<proteinExistence type="evidence at protein level"/>
<organism>
    <name type="scientific">Neocamarosporium betae</name>
    <name type="common">Beet black rot fungus</name>
    <name type="synonym">Pleospora betae</name>
    <dbReference type="NCBI Taxonomy" id="1979465"/>
    <lineage>
        <taxon>Eukaryota</taxon>
        <taxon>Fungi</taxon>
        <taxon>Dikarya</taxon>
        <taxon>Ascomycota</taxon>
        <taxon>Pezizomycotina</taxon>
        <taxon>Dothideomycetes</taxon>
        <taxon>Pleosporomycetidae</taxon>
        <taxon>Pleosporales</taxon>
        <taxon>Pleosporineae</taxon>
        <taxon>Pleosporaceae</taxon>
        <taxon>Neocamarosporium</taxon>
    </lineage>
</organism>
<keyword id="KW-0012">Acyltransferase</keyword>
<keyword id="KW-0489">Methyltransferase</keyword>
<keyword id="KW-0511">Multifunctional enzyme</keyword>
<keyword id="KW-0521">NADP</keyword>
<keyword id="KW-0560">Oxidoreductase</keyword>
<keyword id="KW-0596">Phosphopantetheine</keyword>
<keyword id="KW-0597">Phosphoprotein</keyword>
<keyword id="KW-0949">S-adenosyl-L-methionine</keyword>
<keyword id="KW-0808">Transferase</keyword>
<gene>
    <name evidence="9" type="primary">bet1</name>
</gene>